<proteinExistence type="evidence at protein level"/>
<gene>
    <name evidence="30" type="primary">AGXT</name>
    <name type="synonym">AGT1</name>
    <name type="synonym">SPAT</name>
</gene>
<organism>
    <name type="scientific">Homo sapiens</name>
    <name type="common">Human</name>
    <dbReference type="NCBI Taxonomy" id="9606"/>
    <lineage>
        <taxon>Eukaryota</taxon>
        <taxon>Metazoa</taxon>
        <taxon>Chordata</taxon>
        <taxon>Craniata</taxon>
        <taxon>Vertebrata</taxon>
        <taxon>Euteleostomi</taxon>
        <taxon>Mammalia</taxon>
        <taxon>Eutheria</taxon>
        <taxon>Euarchontoglires</taxon>
        <taxon>Primates</taxon>
        <taxon>Haplorrhini</taxon>
        <taxon>Catarrhini</taxon>
        <taxon>Hominidae</taxon>
        <taxon>Homo</taxon>
    </lineage>
</organism>
<dbReference type="EC" id="2.6.1.44" evidence="7 9 21 22 24"/>
<dbReference type="EC" id="2.6.1.51" evidence="2"/>
<dbReference type="EMBL" id="X56092">
    <property type="protein sequence ID" value="CAA39572.1"/>
    <property type="molecule type" value="mRNA"/>
</dbReference>
<dbReference type="EMBL" id="X53414">
    <property type="protein sequence ID" value="CAA37493.1"/>
    <property type="molecule type" value="mRNA"/>
</dbReference>
<dbReference type="EMBL" id="D13368">
    <property type="protein sequence ID" value="BAA02632.1"/>
    <property type="molecule type" value="mRNA"/>
</dbReference>
<dbReference type="EMBL" id="M61763">
    <property type="protein sequence ID" value="AAA51680.1"/>
    <property type="molecule type" value="Genomic_DNA"/>
</dbReference>
<dbReference type="EMBL" id="AK292754">
    <property type="protein sequence ID" value="BAF85443.1"/>
    <property type="molecule type" value="mRNA"/>
</dbReference>
<dbReference type="EMBL" id="AC104809">
    <property type="protein sequence ID" value="AAY24168.1"/>
    <property type="molecule type" value="Genomic_DNA"/>
</dbReference>
<dbReference type="EMBL" id="CH471063">
    <property type="protein sequence ID" value="EAW71222.1"/>
    <property type="molecule type" value="Genomic_DNA"/>
</dbReference>
<dbReference type="EMBL" id="BC132819">
    <property type="protein sequence ID" value="AAI32820.1"/>
    <property type="molecule type" value="mRNA"/>
</dbReference>
<dbReference type="CCDS" id="CCDS2543.1"/>
<dbReference type="PIR" id="I39419">
    <property type="entry name" value="XNHUSP"/>
</dbReference>
<dbReference type="RefSeq" id="NP_000021.1">
    <property type="nucleotide sequence ID" value="NM_000030.3"/>
</dbReference>
<dbReference type="PDB" id="1H0C">
    <property type="method" value="X-ray"/>
    <property type="resolution" value="2.50 A"/>
    <property type="chains" value="A=1-392"/>
</dbReference>
<dbReference type="PDB" id="1J04">
    <property type="method" value="X-ray"/>
    <property type="resolution" value="2.60 A"/>
    <property type="chains" value="A=1-392"/>
</dbReference>
<dbReference type="PDB" id="2YOB">
    <property type="method" value="X-ray"/>
    <property type="resolution" value="1.90 A"/>
    <property type="chains" value="A/B=1-388"/>
</dbReference>
<dbReference type="PDB" id="3R9A">
    <property type="method" value="X-ray"/>
    <property type="resolution" value="2.35 A"/>
    <property type="chains" value="A/C=1-392"/>
</dbReference>
<dbReference type="PDB" id="4CBR">
    <property type="method" value="X-ray"/>
    <property type="resolution" value="2.30 A"/>
    <property type="chains" value="A=1-392"/>
</dbReference>
<dbReference type="PDB" id="4CBS">
    <property type="method" value="X-ray"/>
    <property type="resolution" value="2.30 A"/>
    <property type="chains" value="A=1-392"/>
</dbReference>
<dbReference type="PDB" id="4I8A">
    <property type="method" value="X-ray"/>
    <property type="resolution" value="2.90 A"/>
    <property type="chains" value="A/B/C/D=1-392"/>
</dbReference>
<dbReference type="PDB" id="4KXK">
    <property type="method" value="X-ray"/>
    <property type="resolution" value="2.90 A"/>
    <property type="chains" value="A/C=1-392"/>
</dbReference>
<dbReference type="PDB" id="4KYO">
    <property type="method" value="X-ray"/>
    <property type="resolution" value="2.20 A"/>
    <property type="chains" value="A/C=1-392"/>
</dbReference>
<dbReference type="PDB" id="5F9S">
    <property type="method" value="X-ray"/>
    <property type="resolution" value="1.70 A"/>
    <property type="chains" value="A/B=6-391"/>
</dbReference>
<dbReference type="PDB" id="5HHY">
    <property type="method" value="X-ray"/>
    <property type="resolution" value="1.70 A"/>
    <property type="chains" value="A/B=6-391"/>
</dbReference>
<dbReference type="PDB" id="5LUC">
    <property type="method" value="X-ray"/>
    <property type="resolution" value="1.80 A"/>
    <property type="chains" value="A/B/E/G/M/N/S/T=1-392"/>
</dbReference>
<dbReference type="PDB" id="5OFY">
    <property type="method" value="X-ray"/>
    <property type="resolution" value="2.80 A"/>
    <property type="chains" value="A=1-392"/>
</dbReference>
<dbReference type="PDB" id="5OG0">
    <property type="method" value="X-ray"/>
    <property type="resolution" value="2.50 A"/>
    <property type="chains" value="A=1-392"/>
</dbReference>
<dbReference type="PDB" id="6RV0">
    <property type="method" value="X-ray"/>
    <property type="resolution" value="2.70 A"/>
    <property type="chains" value="A=1-392"/>
</dbReference>
<dbReference type="PDB" id="6RV1">
    <property type="method" value="X-ray"/>
    <property type="resolution" value="3.00 A"/>
    <property type="chains" value="A=1-392"/>
</dbReference>
<dbReference type="PDB" id="7NS7">
    <property type="method" value="X-ray"/>
    <property type="resolution" value="2.20 A"/>
    <property type="chains" value="A/B=1-392"/>
</dbReference>
<dbReference type="PDBsum" id="1H0C"/>
<dbReference type="PDBsum" id="1J04"/>
<dbReference type="PDBsum" id="2YOB"/>
<dbReference type="PDBsum" id="3R9A"/>
<dbReference type="PDBsum" id="4CBR"/>
<dbReference type="PDBsum" id="4CBS"/>
<dbReference type="PDBsum" id="4I8A"/>
<dbReference type="PDBsum" id="4KXK"/>
<dbReference type="PDBsum" id="4KYO"/>
<dbReference type="PDBsum" id="5F9S"/>
<dbReference type="PDBsum" id="5HHY"/>
<dbReference type="PDBsum" id="5LUC"/>
<dbReference type="PDBsum" id="5OFY"/>
<dbReference type="PDBsum" id="5OG0"/>
<dbReference type="PDBsum" id="6RV0"/>
<dbReference type="PDBsum" id="6RV1"/>
<dbReference type="PDBsum" id="7NS7"/>
<dbReference type="SMR" id="P21549"/>
<dbReference type="BioGRID" id="106694">
    <property type="interactions" value="43"/>
</dbReference>
<dbReference type="DIP" id="DIP-59650N"/>
<dbReference type="FunCoup" id="P21549">
    <property type="interactions" value="880"/>
</dbReference>
<dbReference type="IntAct" id="P21549">
    <property type="interactions" value="39"/>
</dbReference>
<dbReference type="STRING" id="9606.ENSP00000302620"/>
<dbReference type="BindingDB" id="P21549"/>
<dbReference type="ChEMBL" id="CHEMBL5169121"/>
<dbReference type="DrugBank" id="DB08060">
    <property type="generic name" value="4-(2-AMINOPHENYL)-4-OXOBUTANOIC ACID"/>
</dbReference>
<dbReference type="DrugBank" id="DB00160">
    <property type="generic name" value="Alanine"/>
</dbReference>
<dbReference type="DrugBank" id="DB02079">
    <property type="generic name" value="Aminooxyacetic acid"/>
</dbReference>
<dbReference type="DrugBank" id="DB00145">
    <property type="generic name" value="Glycine"/>
</dbReference>
<dbReference type="DrugBank" id="DB04083">
    <property type="generic name" value="N(6)-(pyridoxal phosphate)-L-lysine"/>
</dbReference>
<dbReference type="DrugBank" id="DB00114">
    <property type="generic name" value="Pyridoxal phosphate"/>
</dbReference>
<dbReference type="DrugBank" id="DB00133">
    <property type="generic name" value="Serine"/>
</dbReference>
<dbReference type="iPTMnet" id="P21549"/>
<dbReference type="PhosphoSitePlus" id="P21549"/>
<dbReference type="BioMuta" id="AGXT"/>
<dbReference type="DMDM" id="134855"/>
<dbReference type="jPOST" id="P21549"/>
<dbReference type="MassIVE" id="P21549"/>
<dbReference type="PaxDb" id="9606-ENSP00000302620"/>
<dbReference type="PeptideAtlas" id="P21549"/>
<dbReference type="ProteomicsDB" id="53874"/>
<dbReference type="Antibodypedia" id="34535">
    <property type="antibodies" value="308 antibodies from 30 providers"/>
</dbReference>
<dbReference type="DNASU" id="189"/>
<dbReference type="Ensembl" id="ENST00000307503.4">
    <property type="protein sequence ID" value="ENSP00000302620.3"/>
    <property type="gene ID" value="ENSG00000172482.5"/>
</dbReference>
<dbReference type="GeneID" id="189"/>
<dbReference type="KEGG" id="hsa:189"/>
<dbReference type="MANE-Select" id="ENST00000307503.4">
    <property type="protein sequence ID" value="ENSP00000302620.3"/>
    <property type="RefSeq nucleotide sequence ID" value="NM_000030.3"/>
    <property type="RefSeq protein sequence ID" value="NP_000021.1"/>
</dbReference>
<dbReference type="UCSC" id="uc002waa.5">
    <property type="organism name" value="human"/>
</dbReference>
<dbReference type="AGR" id="HGNC:341"/>
<dbReference type="CTD" id="189"/>
<dbReference type="DisGeNET" id="189"/>
<dbReference type="GeneCards" id="AGXT"/>
<dbReference type="GeneReviews" id="AGXT"/>
<dbReference type="HGNC" id="HGNC:341">
    <property type="gene designation" value="AGXT"/>
</dbReference>
<dbReference type="HPA" id="ENSG00000172482">
    <property type="expression patterns" value="Tissue enriched (liver)"/>
</dbReference>
<dbReference type="MalaCards" id="AGXT"/>
<dbReference type="MIM" id="259900">
    <property type="type" value="phenotype"/>
</dbReference>
<dbReference type="MIM" id="604285">
    <property type="type" value="gene"/>
</dbReference>
<dbReference type="neXtProt" id="NX_P21549"/>
<dbReference type="OpenTargets" id="ENSG00000172482"/>
<dbReference type="Orphanet" id="93598">
    <property type="disease" value="Primary hyperoxaluria type 1"/>
</dbReference>
<dbReference type="PharmGKB" id="PA24633"/>
<dbReference type="VEuPathDB" id="HostDB:ENSG00000172482"/>
<dbReference type="eggNOG" id="KOG2862">
    <property type="taxonomic scope" value="Eukaryota"/>
</dbReference>
<dbReference type="GeneTree" id="ENSGT00940000153241"/>
<dbReference type="HOGENOM" id="CLU_027686_0_0_1"/>
<dbReference type="InParanoid" id="P21549"/>
<dbReference type="OMA" id="YEWDTPA"/>
<dbReference type="OrthoDB" id="7403325at2759"/>
<dbReference type="PAN-GO" id="P21549">
    <property type="GO annotations" value="4 GO annotations based on evolutionary models"/>
</dbReference>
<dbReference type="PhylomeDB" id="P21549"/>
<dbReference type="TreeFam" id="TF313234"/>
<dbReference type="BioCyc" id="MetaCyc:HS10525-MONOMER"/>
<dbReference type="BRENDA" id="2.6.1.44">
    <property type="organism ID" value="2681"/>
</dbReference>
<dbReference type="BRENDA" id="2.6.1.51">
    <property type="organism ID" value="2681"/>
</dbReference>
<dbReference type="PathwayCommons" id="P21549"/>
<dbReference type="Reactome" id="R-HSA-389661">
    <property type="pathway name" value="Glyoxylate metabolism and glycine degradation"/>
</dbReference>
<dbReference type="Reactome" id="R-HSA-9033241">
    <property type="pathway name" value="Peroxisomal protein import"/>
</dbReference>
<dbReference type="SABIO-RK" id="P21549"/>
<dbReference type="SignaLink" id="P21549"/>
<dbReference type="BioGRID-ORCS" id="189">
    <property type="hits" value="8 hits in 1149 CRISPR screens"/>
</dbReference>
<dbReference type="EvolutionaryTrace" id="P21549"/>
<dbReference type="GeneWiki" id="AGXT"/>
<dbReference type="GenomeRNAi" id="189"/>
<dbReference type="Pharos" id="P21549">
    <property type="development level" value="Tbio"/>
</dbReference>
<dbReference type="PRO" id="PR:P21549"/>
<dbReference type="Proteomes" id="UP000005640">
    <property type="component" value="Chromosome 2"/>
</dbReference>
<dbReference type="RNAct" id="P21549">
    <property type="molecule type" value="protein"/>
</dbReference>
<dbReference type="Bgee" id="ENSG00000172482">
    <property type="expression patterns" value="Expressed in right lobe of liver and 96 other cell types or tissues"/>
</dbReference>
<dbReference type="GO" id="GO:0005829">
    <property type="term" value="C:cytosol"/>
    <property type="evidence" value="ECO:0000304"/>
    <property type="project" value="Reactome"/>
</dbReference>
<dbReference type="GO" id="GO:0043231">
    <property type="term" value="C:intracellular membrane-bounded organelle"/>
    <property type="evidence" value="ECO:0000314"/>
    <property type="project" value="HPA"/>
</dbReference>
<dbReference type="GO" id="GO:0005782">
    <property type="term" value="C:peroxisomal matrix"/>
    <property type="evidence" value="ECO:0000314"/>
    <property type="project" value="UniProtKB"/>
</dbReference>
<dbReference type="GO" id="GO:0005777">
    <property type="term" value="C:peroxisome"/>
    <property type="evidence" value="ECO:0000314"/>
    <property type="project" value="UniProtKB"/>
</dbReference>
<dbReference type="GO" id="GO:0008453">
    <property type="term" value="F:alanine-glyoxylate transaminase activity"/>
    <property type="evidence" value="ECO:0000314"/>
    <property type="project" value="UniProtKB"/>
</dbReference>
<dbReference type="GO" id="GO:0016597">
    <property type="term" value="F:amino acid binding"/>
    <property type="evidence" value="ECO:0000314"/>
    <property type="project" value="UniProtKB"/>
</dbReference>
<dbReference type="GO" id="GO:0042802">
    <property type="term" value="F:identical protein binding"/>
    <property type="evidence" value="ECO:0000353"/>
    <property type="project" value="IntAct"/>
</dbReference>
<dbReference type="GO" id="GO:0004760">
    <property type="term" value="F:L-serine-pyruvate transaminase activity"/>
    <property type="evidence" value="ECO:0000314"/>
    <property type="project" value="UniProtKB"/>
</dbReference>
<dbReference type="GO" id="GO:0042803">
    <property type="term" value="F:protein homodimerization activity"/>
    <property type="evidence" value="ECO:0000314"/>
    <property type="project" value="UniProtKB"/>
</dbReference>
<dbReference type="GO" id="GO:0030170">
    <property type="term" value="F:pyridoxal phosphate binding"/>
    <property type="evidence" value="ECO:0000314"/>
    <property type="project" value="UniProtKB"/>
</dbReference>
<dbReference type="GO" id="GO:0008483">
    <property type="term" value="F:transaminase activity"/>
    <property type="evidence" value="ECO:0000314"/>
    <property type="project" value="UniProtKB"/>
</dbReference>
<dbReference type="GO" id="GO:0019265">
    <property type="term" value="P:glycine biosynthetic process, by transamination of glyoxylate"/>
    <property type="evidence" value="ECO:0000314"/>
    <property type="project" value="UniProtKB"/>
</dbReference>
<dbReference type="GO" id="GO:0009436">
    <property type="term" value="P:glyoxylate catabolic process"/>
    <property type="evidence" value="ECO:0000314"/>
    <property type="project" value="UniProtKB"/>
</dbReference>
<dbReference type="GO" id="GO:0046487">
    <property type="term" value="P:glyoxylate metabolic process"/>
    <property type="evidence" value="ECO:0000314"/>
    <property type="project" value="UniProtKB"/>
</dbReference>
<dbReference type="GO" id="GO:0042853">
    <property type="term" value="P:L-alanine catabolic process"/>
    <property type="evidence" value="ECO:0000314"/>
    <property type="project" value="UniProtKB"/>
</dbReference>
<dbReference type="GO" id="GO:0019448">
    <property type="term" value="P:L-cysteine catabolic process"/>
    <property type="evidence" value="ECO:0000314"/>
    <property type="project" value="UniProtKB"/>
</dbReference>
<dbReference type="GO" id="GO:0006563">
    <property type="term" value="P:L-serine metabolic process"/>
    <property type="evidence" value="ECO:0000314"/>
    <property type="project" value="UniProtKB"/>
</dbReference>
<dbReference type="GO" id="GO:0007219">
    <property type="term" value="P:Notch signaling pathway"/>
    <property type="evidence" value="ECO:0007669"/>
    <property type="project" value="Ensembl"/>
</dbReference>
<dbReference type="GO" id="GO:0046724">
    <property type="term" value="P:oxalic acid secretion"/>
    <property type="evidence" value="ECO:0007669"/>
    <property type="project" value="Ensembl"/>
</dbReference>
<dbReference type="CDD" id="cd06451">
    <property type="entry name" value="AGAT_like"/>
    <property type="match status" value="1"/>
</dbReference>
<dbReference type="FunFam" id="3.90.1150.10:FF:000393">
    <property type="entry name" value="Serine--pyruvate aminotransferase"/>
    <property type="match status" value="1"/>
</dbReference>
<dbReference type="FunFam" id="3.40.640.10:FF:000027">
    <property type="entry name" value="Serine--pyruvate aminotransferase, mitochondrial"/>
    <property type="match status" value="1"/>
</dbReference>
<dbReference type="Gene3D" id="3.90.1150.10">
    <property type="entry name" value="Aspartate Aminotransferase, domain 1"/>
    <property type="match status" value="1"/>
</dbReference>
<dbReference type="Gene3D" id="3.40.640.10">
    <property type="entry name" value="Type I PLP-dependent aspartate aminotransferase-like (Major domain)"/>
    <property type="match status" value="1"/>
</dbReference>
<dbReference type="InterPro" id="IPR000192">
    <property type="entry name" value="Aminotrans_V_dom"/>
</dbReference>
<dbReference type="InterPro" id="IPR020578">
    <property type="entry name" value="Aminotrans_V_PyrdxlP_BS"/>
</dbReference>
<dbReference type="InterPro" id="IPR015424">
    <property type="entry name" value="PyrdxlP-dep_Trfase"/>
</dbReference>
<dbReference type="InterPro" id="IPR015421">
    <property type="entry name" value="PyrdxlP-dep_Trfase_major"/>
</dbReference>
<dbReference type="InterPro" id="IPR015422">
    <property type="entry name" value="PyrdxlP-dep_Trfase_small"/>
</dbReference>
<dbReference type="InterPro" id="IPR024169">
    <property type="entry name" value="SP_NH2Trfase/AEP_transaminase"/>
</dbReference>
<dbReference type="PANTHER" id="PTHR21152:SF40">
    <property type="entry name" value="ALANINE--GLYOXYLATE AMINOTRANSFERASE"/>
    <property type="match status" value="1"/>
</dbReference>
<dbReference type="PANTHER" id="PTHR21152">
    <property type="entry name" value="AMINOTRANSFERASE CLASS V"/>
    <property type="match status" value="1"/>
</dbReference>
<dbReference type="Pfam" id="PF00266">
    <property type="entry name" value="Aminotran_5"/>
    <property type="match status" value="1"/>
</dbReference>
<dbReference type="PIRSF" id="PIRSF000524">
    <property type="entry name" value="SPT"/>
    <property type="match status" value="1"/>
</dbReference>
<dbReference type="SUPFAM" id="SSF53383">
    <property type="entry name" value="PLP-dependent transferases"/>
    <property type="match status" value="1"/>
</dbReference>
<dbReference type="PROSITE" id="PS00595">
    <property type="entry name" value="AA_TRANSFER_CLASS_5"/>
    <property type="match status" value="1"/>
</dbReference>
<accession>P21549</accession>
<accession>Q53QU6</accession>
<name>AGT1_HUMAN</name>
<protein>
    <recommendedName>
        <fullName evidence="28">Alanine--glyoxylate aminotransferase</fullName>
        <shortName>AGT</shortName>
        <ecNumber evidence="7 9 21 22 24">2.6.1.44</ecNumber>
    </recommendedName>
    <alternativeName>
        <fullName evidence="28">Serine--pyruvate aminotransferase</fullName>
        <shortName>SPT</shortName>
        <ecNumber evidence="2">2.6.1.51</ecNumber>
    </alternativeName>
</protein>
<sequence length="392" mass="43010">MASHKLLVTPPKALLKPLSIPNQLLLGPGPSNLPPRIMAAGGLQMIGSMSKDMYQIMDEIKEGIQYVFQTRNPLTLVISGSGHCALEAALVNVLEPGDSFLVGANGIWGQRAVDIGERIGARVHPMTKDPGGHYTLQEVEEGLAQHKPVLLFLTHGESSTGVLQPLDGFGELCHRYKCLLLVDSVASLGGTPLYMDRQGIDILYSGSQKALNAPPGTSLISFSDKAKKKMYSRKTKPFSFYLDIKWLANFWGCDDQPRMYHHTIPVISLYSLRESLALIAEQGLENSWRQHREAAAYLHGRLQALGLQLFVKDPALRLPTVTTVAVPAGYDWRDIVSYVIDHFDIEIMGGLGPSTGKVLRIGLLGCNATRENVDRVTEALRAALQHCPKKKL</sequence>
<evidence type="ECO:0000250" key="1">
    <source>
        <dbReference type="UniProtKB" id="O35423"/>
    </source>
</evidence>
<evidence type="ECO:0000269" key="2">
    <source>
    </source>
</evidence>
<evidence type="ECO:0000269" key="3">
    <source>
    </source>
</evidence>
<evidence type="ECO:0000269" key="4">
    <source>
    </source>
</evidence>
<evidence type="ECO:0000269" key="5">
    <source>
    </source>
</evidence>
<evidence type="ECO:0000269" key="6">
    <source>
    </source>
</evidence>
<evidence type="ECO:0000269" key="7">
    <source>
    </source>
</evidence>
<evidence type="ECO:0000269" key="8">
    <source>
    </source>
</evidence>
<evidence type="ECO:0000269" key="9">
    <source>
    </source>
</evidence>
<evidence type="ECO:0000269" key="10">
    <source>
    </source>
</evidence>
<evidence type="ECO:0000269" key="11">
    <source>
    </source>
</evidence>
<evidence type="ECO:0000269" key="12">
    <source>
    </source>
</evidence>
<evidence type="ECO:0000269" key="13">
    <source>
    </source>
</evidence>
<evidence type="ECO:0000269" key="14">
    <source>
    </source>
</evidence>
<evidence type="ECO:0000269" key="15">
    <source>
    </source>
</evidence>
<evidence type="ECO:0000269" key="16">
    <source>
    </source>
</evidence>
<evidence type="ECO:0000269" key="17">
    <source>
    </source>
</evidence>
<evidence type="ECO:0000269" key="18">
    <source>
    </source>
</evidence>
<evidence type="ECO:0000269" key="19">
    <source>
    </source>
</evidence>
<evidence type="ECO:0000269" key="20">
    <source>
    </source>
</evidence>
<evidence type="ECO:0000269" key="21">
    <source>
    </source>
</evidence>
<evidence type="ECO:0000269" key="22">
    <source>
    </source>
</evidence>
<evidence type="ECO:0000269" key="23">
    <source>
    </source>
</evidence>
<evidence type="ECO:0000269" key="24">
    <source>
    </source>
</evidence>
<evidence type="ECO:0000269" key="25">
    <source>
    </source>
</evidence>
<evidence type="ECO:0000269" key="26">
    <source>
    </source>
</evidence>
<evidence type="ECO:0000269" key="27">
    <source>
    </source>
</evidence>
<evidence type="ECO:0000305" key="28"/>
<evidence type="ECO:0000305" key="29">
    <source>
    </source>
</evidence>
<evidence type="ECO:0000312" key="30">
    <source>
        <dbReference type="HGNC" id="HGNC:341"/>
    </source>
</evidence>
<evidence type="ECO:0007744" key="31">
    <source>
    </source>
</evidence>
<evidence type="ECO:0007829" key="32">
    <source>
        <dbReference type="PDB" id="4KYO"/>
    </source>
</evidence>
<evidence type="ECO:0007829" key="33">
    <source>
        <dbReference type="PDB" id="5F9S"/>
    </source>
</evidence>
<reference key="1">
    <citation type="journal article" date="1990" name="Eur. J. Biochem.">
        <title>Cloning and nucleotide sequence of cDNA encoding human liver serine-pyruvate aminotransferase.</title>
        <authorList>
            <person name="Nishiyama K."/>
            <person name="Berstein G."/>
            <person name="Oda T."/>
            <person name="Ichiyama A."/>
        </authorList>
    </citation>
    <scope>NUCLEOTIDE SEQUENCE [MRNA]</scope>
    <source>
        <tissue>Liver</tissue>
    </source>
</reference>
<reference key="2">
    <citation type="journal article" date="1990" name="J. Cell Biol.">
        <title>Identification of mutations associated with peroxisome-to-mitochondrion mistargeting of alanine/glyoxylate aminotransferase in primary hyperoxaluria type 1.</title>
        <authorList>
            <person name="Purdue P.E."/>
            <person name="Takada Y."/>
            <person name="Danpure C.J."/>
        </authorList>
    </citation>
    <scope>NUCLEOTIDE SEQUENCE [MRNA]</scope>
    <scope>VARIANTS LEU-11 AND MET-340</scope>
    <scope>VARIANT HP1 ARG-170</scope>
    <scope>SUBCELLULAR LOCATION</scope>
</reference>
<reference key="3">
    <citation type="journal article" date="1990" name="Biochem. J.">
        <title>Human peroxisomal L-alanine: glyoxylate aminotransferase. Evolutionary loss of a mitochondrial targeting signal by point mutation of the initiation codon.</title>
        <authorList>
            <person name="Takada Y."/>
            <person name="Kaneko N."/>
            <person name="Esumi H."/>
            <person name="Purdue P.E."/>
            <person name="Danpure C.J."/>
        </authorList>
    </citation>
    <scope>NUCLEOTIDE SEQUENCE [MRNA]</scope>
</reference>
<reference key="4">
    <citation type="journal article" date="1991" name="Genomics">
        <title>Characterization and chromosomal mapping of a genomic clone encoding human alanine:glyoxylate aminotransferase.</title>
        <authorList>
            <person name="Purdue P.E."/>
            <person name="Lumb M.J."/>
            <person name="Fox M."/>
            <person name="Griffo G."/>
            <person name="Hamon-Benais C."/>
            <person name="Povey S."/>
            <person name="Danpure C.J."/>
        </authorList>
    </citation>
    <scope>NUCLEOTIDE SEQUENCE [GENOMIC DNA]</scope>
</reference>
<reference key="5">
    <citation type="journal article" date="2004" name="Nat. Genet.">
        <title>Complete sequencing and characterization of 21,243 full-length human cDNAs.</title>
        <authorList>
            <person name="Ota T."/>
            <person name="Suzuki Y."/>
            <person name="Nishikawa T."/>
            <person name="Otsuki T."/>
            <person name="Sugiyama T."/>
            <person name="Irie R."/>
            <person name="Wakamatsu A."/>
            <person name="Hayashi K."/>
            <person name="Sato H."/>
            <person name="Nagai K."/>
            <person name="Kimura K."/>
            <person name="Makita H."/>
            <person name="Sekine M."/>
            <person name="Obayashi M."/>
            <person name="Nishi T."/>
            <person name="Shibahara T."/>
            <person name="Tanaka T."/>
            <person name="Ishii S."/>
            <person name="Yamamoto J."/>
            <person name="Saito K."/>
            <person name="Kawai Y."/>
            <person name="Isono Y."/>
            <person name="Nakamura Y."/>
            <person name="Nagahari K."/>
            <person name="Murakami K."/>
            <person name="Yasuda T."/>
            <person name="Iwayanagi T."/>
            <person name="Wagatsuma M."/>
            <person name="Shiratori A."/>
            <person name="Sudo H."/>
            <person name="Hosoiri T."/>
            <person name="Kaku Y."/>
            <person name="Kodaira H."/>
            <person name="Kondo H."/>
            <person name="Sugawara M."/>
            <person name="Takahashi M."/>
            <person name="Kanda K."/>
            <person name="Yokoi T."/>
            <person name="Furuya T."/>
            <person name="Kikkawa E."/>
            <person name="Omura Y."/>
            <person name="Abe K."/>
            <person name="Kamihara K."/>
            <person name="Katsuta N."/>
            <person name="Sato K."/>
            <person name="Tanikawa M."/>
            <person name="Yamazaki M."/>
            <person name="Ninomiya K."/>
            <person name="Ishibashi T."/>
            <person name="Yamashita H."/>
            <person name="Murakawa K."/>
            <person name="Fujimori K."/>
            <person name="Tanai H."/>
            <person name="Kimata M."/>
            <person name="Watanabe M."/>
            <person name="Hiraoka S."/>
            <person name="Chiba Y."/>
            <person name="Ishida S."/>
            <person name="Ono Y."/>
            <person name="Takiguchi S."/>
            <person name="Watanabe S."/>
            <person name="Yosida M."/>
            <person name="Hotuta T."/>
            <person name="Kusano J."/>
            <person name="Kanehori K."/>
            <person name="Takahashi-Fujii A."/>
            <person name="Hara H."/>
            <person name="Tanase T.-O."/>
            <person name="Nomura Y."/>
            <person name="Togiya S."/>
            <person name="Komai F."/>
            <person name="Hara R."/>
            <person name="Takeuchi K."/>
            <person name="Arita M."/>
            <person name="Imose N."/>
            <person name="Musashino K."/>
            <person name="Yuuki H."/>
            <person name="Oshima A."/>
            <person name="Sasaki N."/>
            <person name="Aotsuka S."/>
            <person name="Yoshikawa Y."/>
            <person name="Matsunawa H."/>
            <person name="Ichihara T."/>
            <person name="Shiohata N."/>
            <person name="Sano S."/>
            <person name="Moriya S."/>
            <person name="Momiyama H."/>
            <person name="Satoh N."/>
            <person name="Takami S."/>
            <person name="Terashima Y."/>
            <person name="Suzuki O."/>
            <person name="Nakagawa S."/>
            <person name="Senoh A."/>
            <person name="Mizoguchi H."/>
            <person name="Goto Y."/>
            <person name="Shimizu F."/>
            <person name="Wakebe H."/>
            <person name="Hishigaki H."/>
            <person name="Watanabe T."/>
            <person name="Sugiyama A."/>
            <person name="Takemoto M."/>
            <person name="Kawakami B."/>
            <person name="Yamazaki M."/>
            <person name="Watanabe K."/>
            <person name="Kumagai A."/>
            <person name="Itakura S."/>
            <person name="Fukuzumi Y."/>
            <person name="Fujimori Y."/>
            <person name="Komiyama M."/>
            <person name="Tashiro H."/>
            <person name="Tanigami A."/>
            <person name="Fujiwara T."/>
            <person name="Ono T."/>
            <person name="Yamada K."/>
            <person name="Fujii Y."/>
            <person name="Ozaki K."/>
            <person name="Hirao M."/>
            <person name="Ohmori Y."/>
            <person name="Kawabata A."/>
            <person name="Hikiji T."/>
            <person name="Kobatake N."/>
            <person name="Inagaki H."/>
            <person name="Ikema Y."/>
            <person name="Okamoto S."/>
            <person name="Okitani R."/>
            <person name="Kawakami T."/>
            <person name="Noguchi S."/>
            <person name="Itoh T."/>
            <person name="Shigeta K."/>
            <person name="Senba T."/>
            <person name="Matsumura K."/>
            <person name="Nakajima Y."/>
            <person name="Mizuno T."/>
            <person name="Morinaga M."/>
            <person name="Sasaki M."/>
            <person name="Togashi T."/>
            <person name="Oyama M."/>
            <person name="Hata H."/>
            <person name="Watanabe M."/>
            <person name="Komatsu T."/>
            <person name="Mizushima-Sugano J."/>
            <person name="Satoh T."/>
            <person name="Shirai Y."/>
            <person name="Takahashi Y."/>
            <person name="Nakagawa K."/>
            <person name="Okumura K."/>
            <person name="Nagase T."/>
            <person name="Nomura N."/>
            <person name="Kikuchi H."/>
            <person name="Masuho Y."/>
            <person name="Yamashita R."/>
            <person name="Nakai K."/>
            <person name="Yada T."/>
            <person name="Nakamura Y."/>
            <person name="Ohara O."/>
            <person name="Isogai T."/>
            <person name="Sugano S."/>
        </authorList>
    </citation>
    <scope>NUCLEOTIDE SEQUENCE [LARGE SCALE MRNA]</scope>
    <source>
        <tissue>Liver</tissue>
    </source>
</reference>
<reference key="6">
    <citation type="journal article" date="2005" name="Nature">
        <title>Generation and annotation of the DNA sequences of human chromosomes 2 and 4.</title>
        <authorList>
            <person name="Hillier L.W."/>
            <person name="Graves T.A."/>
            <person name="Fulton R.S."/>
            <person name="Fulton L.A."/>
            <person name="Pepin K.H."/>
            <person name="Minx P."/>
            <person name="Wagner-McPherson C."/>
            <person name="Layman D."/>
            <person name="Wylie K."/>
            <person name="Sekhon M."/>
            <person name="Becker M.C."/>
            <person name="Fewell G.A."/>
            <person name="Delehaunty K.D."/>
            <person name="Miner T.L."/>
            <person name="Nash W.E."/>
            <person name="Kremitzki C."/>
            <person name="Oddy L."/>
            <person name="Du H."/>
            <person name="Sun H."/>
            <person name="Bradshaw-Cordum H."/>
            <person name="Ali J."/>
            <person name="Carter J."/>
            <person name="Cordes M."/>
            <person name="Harris A."/>
            <person name="Isak A."/>
            <person name="van Brunt A."/>
            <person name="Nguyen C."/>
            <person name="Du F."/>
            <person name="Courtney L."/>
            <person name="Kalicki J."/>
            <person name="Ozersky P."/>
            <person name="Abbott S."/>
            <person name="Armstrong J."/>
            <person name="Belter E.A."/>
            <person name="Caruso L."/>
            <person name="Cedroni M."/>
            <person name="Cotton M."/>
            <person name="Davidson T."/>
            <person name="Desai A."/>
            <person name="Elliott G."/>
            <person name="Erb T."/>
            <person name="Fronick C."/>
            <person name="Gaige T."/>
            <person name="Haakenson W."/>
            <person name="Haglund K."/>
            <person name="Holmes A."/>
            <person name="Harkins R."/>
            <person name="Kim K."/>
            <person name="Kruchowski S.S."/>
            <person name="Strong C.M."/>
            <person name="Grewal N."/>
            <person name="Goyea E."/>
            <person name="Hou S."/>
            <person name="Levy A."/>
            <person name="Martinka S."/>
            <person name="Mead K."/>
            <person name="McLellan M.D."/>
            <person name="Meyer R."/>
            <person name="Randall-Maher J."/>
            <person name="Tomlinson C."/>
            <person name="Dauphin-Kohlberg S."/>
            <person name="Kozlowicz-Reilly A."/>
            <person name="Shah N."/>
            <person name="Swearengen-Shahid S."/>
            <person name="Snider J."/>
            <person name="Strong J.T."/>
            <person name="Thompson J."/>
            <person name="Yoakum M."/>
            <person name="Leonard S."/>
            <person name="Pearman C."/>
            <person name="Trani L."/>
            <person name="Radionenko M."/>
            <person name="Waligorski J.E."/>
            <person name="Wang C."/>
            <person name="Rock S.M."/>
            <person name="Tin-Wollam A.-M."/>
            <person name="Maupin R."/>
            <person name="Latreille P."/>
            <person name="Wendl M.C."/>
            <person name="Yang S.-P."/>
            <person name="Pohl C."/>
            <person name="Wallis J.W."/>
            <person name="Spieth J."/>
            <person name="Bieri T.A."/>
            <person name="Berkowicz N."/>
            <person name="Nelson J.O."/>
            <person name="Osborne J."/>
            <person name="Ding L."/>
            <person name="Meyer R."/>
            <person name="Sabo A."/>
            <person name="Shotland Y."/>
            <person name="Sinha P."/>
            <person name="Wohldmann P.E."/>
            <person name="Cook L.L."/>
            <person name="Hickenbotham M.T."/>
            <person name="Eldred J."/>
            <person name="Williams D."/>
            <person name="Jones T.A."/>
            <person name="She X."/>
            <person name="Ciccarelli F.D."/>
            <person name="Izaurralde E."/>
            <person name="Taylor J."/>
            <person name="Schmutz J."/>
            <person name="Myers R.M."/>
            <person name="Cox D.R."/>
            <person name="Huang X."/>
            <person name="McPherson J.D."/>
            <person name="Mardis E.R."/>
            <person name="Clifton S.W."/>
            <person name="Warren W.C."/>
            <person name="Chinwalla A.T."/>
            <person name="Eddy S.R."/>
            <person name="Marra M.A."/>
            <person name="Ovcharenko I."/>
            <person name="Furey T.S."/>
            <person name="Miller W."/>
            <person name="Eichler E.E."/>
            <person name="Bork P."/>
            <person name="Suyama M."/>
            <person name="Torrents D."/>
            <person name="Waterston R.H."/>
            <person name="Wilson R.K."/>
        </authorList>
    </citation>
    <scope>NUCLEOTIDE SEQUENCE [LARGE SCALE GENOMIC DNA]</scope>
</reference>
<reference key="7">
    <citation type="submission" date="2005-07" db="EMBL/GenBank/DDBJ databases">
        <authorList>
            <person name="Mural R.J."/>
            <person name="Istrail S."/>
            <person name="Sutton G.G."/>
            <person name="Florea L."/>
            <person name="Halpern A.L."/>
            <person name="Mobarry C.M."/>
            <person name="Lippert R."/>
            <person name="Walenz B."/>
            <person name="Shatkay H."/>
            <person name="Dew I."/>
            <person name="Miller J.R."/>
            <person name="Flanigan M.J."/>
            <person name="Edwards N.J."/>
            <person name="Bolanos R."/>
            <person name="Fasulo D."/>
            <person name="Halldorsson B.V."/>
            <person name="Hannenhalli S."/>
            <person name="Turner R."/>
            <person name="Yooseph S."/>
            <person name="Lu F."/>
            <person name="Nusskern D.R."/>
            <person name="Shue B.C."/>
            <person name="Zheng X.H."/>
            <person name="Zhong F."/>
            <person name="Delcher A.L."/>
            <person name="Huson D.H."/>
            <person name="Kravitz S.A."/>
            <person name="Mouchard L."/>
            <person name="Reinert K."/>
            <person name="Remington K.A."/>
            <person name="Clark A.G."/>
            <person name="Waterman M.S."/>
            <person name="Eichler E.E."/>
            <person name="Adams M.D."/>
            <person name="Hunkapiller M.W."/>
            <person name="Myers E.W."/>
            <person name="Venter J.C."/>
        </authorList>
    </citation>
    <scope>NUCLEOTIDE SEQUENCE [LARGE SCALE GENOMIC DNA]</scope>
</reference>
<reference key="8">
    <citation type="journal article" date="2004" name="Genome Res.">
        <title>The status, quality, and expansion of the NIH full-length cDNA project: the Mammalian Gene Collection (MGC).</title>
        <authorList>
            <consortium name="The MGC Project Team"/>
        </authorList>
    </citation>
    <scope>NUCLEOTIDE SEQUENCE [LARGE SCALE MRNA]</scope>
</reference>
<reference key="9">
    <citation type="journal article" date="1999" name="J. Biol. Chem.">
        <title>Flux of the L-serine metabolism in rabbit, human, and dog livers. Substantial contributions of both mitochondrial and peroxisomal serine:pyruvate/alanine:glyoxylate aminotransferase.</title>
        <authorList>
            <person name="Xue H.H."/>
            <person name="Sakaguchi T."/>
            <person name="Fujie M."/>
            <person name="Ogawa H."/>
            <person name="Ichiyama A."/>
        </authorList>
    </citation>
    <scope>FUNCTION</scope>
    <scope>CATALYTIC ACTIVITY</scope>
</reference>
<reference key="10">
    <citation type="journal article" date="2014" name="J. Proteomics">
        <title>An enzyme assisted RP-RPLC approach for in-depth analysis of human liver phosphoproteome.</title>
        <authorList>
            <person name="Bian Y."/>
            <person name="Song C."/>
            <person name="Cheng K."/>
            <person name="Dong M."/>
            <person name="Wang F."/>
            <person name="Huang J."/>
            <person name="Sun D."/>
            <person name="Wang L."/>
            <person name="Ye M."/>
            <person name="Zou H."/>
        </authorList>
    </citation>
    <scope>PHOSPHORYLATION [LARGE SCALE ANALYSIS] AT THR-9</scope>
    <scope>IDENTIFICATION BY MASS SPECTROMETRY [LARGE SCALE ANALYSIS]</scope>
    <source>
        <tissue>Liver</tissue>
    </source>
</reference>
<reference key="11">
    <citation type="journal article" date="2003" name="J. Mol. Biol.">
        <title>Crystal structure of alanine:glyoxylate aminotransferase and the relationship between genotype and enzymatic phenotype in primary hyperoxaluria type 1.</title>
        <authorList>
            <person name="Zhang X."/>
            <person name="Roe S.M."/>
            <person name="Hou Y."/>
            <person name="Bartlam M."/>
            <person name="Rao Z."/>
            <person name="Pearl L.H."/>
            <person name="Danpure C.J."/>
        </authorList>
    </citation>
    <scope>X-RAY CRYSTALLOGRAPHY (2.5 ANGSTROMS) IN COMPLEX WITH PYRIDOXAL PHOSPHATE AND AMINO-OXYACETIC ACID</scope>
    <scope>SUBUNIT</scope>
    <scope>PYRIDOXAL PHOSPHATE AT LYS-209</scope>
</reference>
<reference key="12">
    <citation type="journal article" date="1991" name="Biochem. Biophys. Res. Commun.">
        <title>Primary hyperoxaluria type I due to a point mutation of T to C in the coding region of the serine:pyruvate aminotransferase gene.</title>
        <authorList>
            <person name="Nishiyama K."/>
            <person name="Funai T."/>
            <person name="Katafuchi R."/>
            <person name="Hattori F."/>
            <person name="Onoyama K."/>
            <person name="Ichiyama A."/>
        </authorList>
    </citation>
    <scope>VARIANT HP1 PRO-205</scope>
</reference>
<reference key="13">
    <citation type="journal article" date="1992" name="Genomics">
        <title>A glycine-to-glutamate substitution abolishes alanine:glyoxylate aminotransferase catalytic activity in a subset of patients with primary hyperoxaluria type 1.</title>
        <authorList>
            <person name="Purdue P.E."/>
            <person name="Lumb M.J."/>
            <person name="Allsop J."/>
            <person name="Minatogawa Y."/>
            <person name="Danpure C.J."/>
        </authorList>
    </citation>
    <scope>VARIANT HP1 GLU-82</scope>
</reference>
<reference key="14">
    <citation type="journal article" date="1992" name="Hum. Mol. Genet.">
        <title>A serine-to-phenylalanine substitution leads to loss of alanine:glyoxylate aminotransferase catalytic activity and immunoreactivity in a patient with primary hyperoxaluria type 1.</title>
        <authorList>
            <person name="Minatogawa Y."/>
            <person name="Tone S."/>
            <person name="Allsop J."/>
            <person name="Purdue P.E."/>
            <person name="Takada Y."/>
            <person name="Danpure C.J."/>
            <person name="Kido R."/>
        </authorList>
    </citation>
    <scope>VARIANT HP1 PHE-187</scope>
</reference>
<reference key="15">
    <citation type="journal article" date="1993" name="Am. J. Hum. Genet.">
        <title>Enzymological and mutational analysis of a complex primary hyperoxaluria type 1 phenotype involving alanine:glyoxylate aminotransferase peroxisome-to-mitochondrion mistargeting and intraperoxisomal aggregation.</title>
        <authorList>
            <person name="Danpure C.J."/>
            <person name="Purdue P.E."/>
            <person name="Fryer P."/>
            <person name="Griffiths S."/>
            <person name="Allsop J."/>
            <person name="Lumb M.J."/>
            <person name="Guttridge K.M."/>
            <person name="Jennings P.R."/>
            <person name="Scheinman J.I."/>
            <person name="Mauer S.M."/>
            <person name="Davidson N.O."/>
        </authorList>
    </citation>
    <scope>VARIANTS HP1 ARG-41 AND ILE-152</scope>
</reference>
<reference key="16">
    <citation type="journal article" date="1993" name="Biochimie">
        <title>Primary hyperoxaluria type 1 and peroxisome-to-mitochondrion mistargeting of alanine:glyoxylate aminotransferase.</title>
        <authorList>
            <person name="Danpure C.J."/>
        </authorList>
    </citation>
    <scope>REVIEW ON HP1</scope>
</reference>
<reference key="17">
    <citation type="journal article" date="1997" name="J. Med. Genet.">
        <title>Primary hyperoxaluria type 1: a cluster of new mutations in exon 7 of the AGXT gene.</title>
        <authorList>
            <person name="von Schnakenburg C."/>
            <person name="Rumsby G."/>
        </authorList>
    </citation>
    <scope>VARIANTS HP1 CYS-233; HIS-233 AND THR-244</scope>
</reference>
<reference key="18">
    <citation type="journal article" date="1998" name="J. Nephrol.">
        <title>Identification of new mutations in primary hyperoxaluria type 1 (PH1).</title>
        <authorList>
            <person name="von Schnakenburg C."/>
            <person name="Rumsby G."/>
        </authorList>
    </citation>
    <scope>VARIANTS HP1 ARG-108; TYR-173; ARG-190; ALA-296 DEL AND ASP-350</scope>
</reference>
<reference key="19">
    <citation type="journal article" date="1999" name="Hum. Genet.">
        <title>Gene symbol: AGXT. Disease: primary hyperoxaluria type I.</title>
        <authorList>
            <person name="Amoroso A."/>
            <person name="Pirulli D."/>
            <person name="Puzzer D."/>
            <person name="Ferri L."/>
            <person name="Crovella S."/>
            <person name="Ferrettini C."/>
            <person name="Marangella M."/>
            <person name="Mazzola G."/>
            <person name="Florian F."/>
        </authorList>
    </citation>
    <scope>VARIANTS HP1 VAL-41; GLU-95 INS; ARG-116 AND ARG-156</scope>
</reference>
<reference key="20">
    <citation type="journal article" date="1999" name="Hum. Genet.">
        <title>Molecular analysis of hyperoxaluria type 1 in Italian patients reveals eight new mutations in the alanine: glyoxylate aminotransferase gene.</title>
        <authorList>
            <person name="Pirulli D."/>
            <person name="Puzzer D."/>
            <person name="Ferri L."/>
            <person name="Crovella S."/>
            <person name="Amoroso A."/>
            <person name="Ferrettini C."/>
            <person name="Marangella M."/>
            <person name="Mazzola G."/>
            <person name="Florian F."/>
        </authorList>
    </citation>
    <scope>VARIANTS HP1 VAL-41; GLU-95 INS; ARG-116 AND ARG-156</scope>
</reference>
<reference key="21">
    <citation type="journal article" date="1999" name="J. Am. Soc. Nephrol.">
        <title>Primary hyperoxaluria type I: a model for multiple mutations in a monogenic disease within a distinct ethnic group.</title>
        <authorList>
            <person name="Rinat C."/>
            <person name="Wanders R.J.A."/>
            <person name="Drukker A."/>
            <person name="Halle D."/>
            <person name="Frishberg Y."/>
        </authorList>
    </citation>
    <scope>VARIANTS HP1 ARG-41; ARG-156; ARG-190; THR-244; CYS-289 AND PRO-298</scope>
</reference>
<reference key="22">
    <citation type="journal article" date="2000" name="Hum. Mutat.">
        <title>Identification of 5 novel mutations in the AGXT gene.</title>
        <authorList>
            <person name="Basmaison O."/>
            <person name="Rolland M.-O."/>
            <person name="Cochat P."/>
            <person name="Bozon D."/>
        </authorList>
    </citation>
    <scope>VARIANTS HP1 ILE-152; ARG-170; ASN-183; CYS-233 AND THR-244</scope>
</reference>
<reference key="23">
    <citation type="journal article" date="2000" name="J. Biol. Chem.">
        <title>Functional synergism between the most common polymorphism in human alanine:glyoxylate aminotransferase and four of the most common disease-causing mutations.</title>
        <authorList>
            <person name="Lumb M.J."/>
            <person name="Danpure C.J."/>
        </authorList>
    </citation>
    <scope>CHARACTERIZATION OF VARIANTS HP1 ARG-41; GLU-82; ILE-152; ARG-170 AND THR-244</scope>
    <scope>CHARACTERIZATION OF VARIANT LEU-11</scope>
    <scope>MUTAGENESIS OF LYS-209</scope>
    <scope>FUNCTION</scope>
    <scope>CATALYTIC ACTIVITY</scope>
    <scope>SUBCELLULAR LOCATION</scope>
    <scope>COFACTOR</scope>
    <scope>SUBUNIT</scope>
    <scope>BIOPHYSICOCHEMICAL PROPERTIES</scope>
    <scope>ACTIVITY REGULATION</scope>
</reference>
<reference key="24">
    <citation type="journal article" date="2003" name="Mol. Genet. Metab.">
        <title>The AGT gene in Africa: a distinctive minor allele haplotype, a polymorphism (V326I), and a novel PH1 mutation (A112D) in Black Africans.</title>
        <authorList>
            <person name="Coulter-Mackie M.B."/>
            <person name="Tung A."/>
            <person name="Henderson H.E."/>
            <person name="Toone J.R."/>
            <person name="Applegarth D.A."/>
        </authorList>
    </citation>
    <scope>VARIANT HP1 ASP-112</scope>
    <scope>VARIANT ILE-326</scope>
</reference>
<reference key="25">
    <citation type="journal article" date="2003" name="Proc. Natl. Acad. Sci. U.S.A.">
        <title>Primary hyperoxaluria type 1 in the Canary Islands: a conformational disease due to I244T mutation in the P11L-containing alanine:glyoxylate aminotransferase.</title>
        <authorList>
            <person name="Santana A."/>
            <person name="Salido E."/>
            <person name="Torres A."/>
            <person name="Shapiro L.J."/>
        </authorList>
    </citation>
    <scope>CHARACTERIZATION OF VARIANT HP1 THR-244</scope>
    <scope>FUNCTION</scope>
    <scope>CATALYTIC ACTIVITY</scope>
    <scope>BIOPHYSICOCHEMICAL PROPERTIES</scope>
    <scope>SUBUNIT</scope>
    <scope>SUBCELLULAR LOCATION</scope>
</reference>
<reference key="26">
    <citation type="journal article" date="2004" name="Kidney Int.">
        <title>Clinical implications of mutation analysis in primary hyperoxaluria type 1.</title>
        <authorList>
            <person name="van Woerden C.S."/>
            <person name="Groothoff J.W."/>
            <person name="Wijburg F.A."/>
            <person name="Annink C."/>
            <person name="Wanders R.J.A."/>
            <person name="Waterham H.R."/>
        </authorList>
    </citation>
    <scope>VARIANTS HP1 ARG-82; ILE-152; VAL-153; ARG-170 AND ASP-336</scope>
</reference>
<reference key="27">
    <citation type="journal article" date="2005" name="Am. J. Nephrol.">
        <title>Implications of genotype and enzyme phenotype in pyridoxine response of patients with type I primary hyperoxaluria.</title>
        <authorList>
            <person name="Monico C.G."/>
            <person name="Olson J.B."/>
            <person name="Milliner D.S."/>
        </authorList>
    </citation>
    <scope>VARIANTS HP1 VAL-139 DEL; ARG-156; LEU-158; ARG-190; GLU-201; LEU-233; THR-244 AND ARG-253</scope>
    <scope>VARIANT ASN-9</scope>
</reference>
<reference key="28">
    <citation type="journal article" date="2005" name="Am. J. Nephrol.">
        <title>Intra-familial clinical heterogeneity: absence of genotype-phenotype correlation in primary hyperoxaluria type 1 in Israel.</title>
        <authorList>
            <person name="Frishberg Y."/>
            <person name="Rinat C."/>
            <person name="Shalata A."/>
            <person name="Khatib I."/>
            <person name="Feinstein S."/>
            <person name="Becker-Cohen R."/>
            <person name="Weismann I."/>
            <person name="Wanders R.J.A."/>
            <person name="Rumsby G."/>
            <person name="Roels F."/>
            <person name="Mandel H."/>
        </authorList>
    </citation>
    <scope>VARIANTS HP1 ARG-41; ARG-108; ARG-156; ARG-190; ARG-195; HIS-243; THR-244; MET-279; THR-287; CYS-289 AND PRO-298</scope>
    <scope>VARIANT ASN-9</scope>
</reference>
<reference key="29">
    <citation type="journal article" date="2005" name="Mol. Genet. Metab.">
        <title>The major allele of the alanine:glyoxylate aminotransferase gene: nine novel mutations and polymorphisms associated with primary hyperoxaluria type 1.</title>
        <authorList>
            <person name="Coulter-Mackie M.B."/>
            <person name="Lian Q."/>
            <person name="Applegarth D."/>
            <person name="Toone J."/>
        </authorList>
    </citation>
    <scope>VARIANTS HP1 ARG-161 AND LEU-218</scope>
    <scope>VARIANTS THR-279 AND VAL-280</scope>
</reference>
<reference key="30">
    <citation type="journal article" date="2006" name="Mol. Genet. Metab.">
        <title>Consequences of missense mutations for dimerization and turnover of alanine:glyoxylate aminotransferase: study of a spectrum of mutations.</title>
        <authorList>
            <person name="Coulter-Mackie M.B."/>
            <person name="Lian Q."/>
        </authorList>
    </citation>
    <scope>CHARACTERIZATION OF VARIANTS HP1 ARG-41; VAL-41; GLU-82; ARG-108; ASP-112; ARG-156; ARG-161; ARG-170; TYR-173; ASN-183; PHE-187; PRO-205 AND LEU-218</scope>
    <scope>MUTAGENESIS OF LYS-209</scope>
    <scope>SUBUNIT</scope>
</reference>
<reference key="31">
    <citation type="journal article" date="2007" name="Clin. Chem.">
        <title>Selected exonic sequencing of the AGXT gene provides a genetic diagnosis in 50% of patients with primary hyperoxaluria type 1.</title>
        <authorList>
            <person name="Williams E."/>
            <person name="Rumsby G."/>
        </authorList>
    </citation>
    <scope>VARIANTS HP1 CYS-36; ARG-41; GLU-41; PRO-150; ILE-152; ARG-156; LEU-158; CYS-161; SER-161; PRO-166; ARG-170; TYR-173; CYS-233; HIS-233; THR-244 AND ARG-253</scope>
    <scope>VARIANT ASN-9</scope>
    <scope>CHARACTERIZATION OF VARIANTS HP1 CYS-36; GLU-41; PRO-150; ARG-156; LEU-158; CYS-161; SER-161; PRO-166; TYR-173; CYS-233; HIS-233 AND ARG-253</scope>
    <scope>CHARACTERIZATION OF VARIANT ASN-9</scope>
</reference>
<reference key="32">
    <citation type="journal article" date="2013" name="Biochim. Biophys. Acta">
        <title>Gly161 mutations associated with primary hyperoxaluria type I induce the cytosolic aggregation and the intracellular degradation of the apo-form of alanine:glyoxylate aminotransferase.</title>
        <authorList>
            <person name="Oppici E."/>
            <person name="Roncador A."/>
            <person name="Montioli R."/>
            <person name="Bianconi S."/>
            <person name="Cellini B."/>
        </authorList>
    </citation>
    <scope>CHARACTERIZATION OF VARIANTS HP1 ARG-161; CYS-161 AND SER-161</scope>
    <scope>FUNCTION</scope>
    <scope>CATALYTIC ACTIVITY</scope>
    <scope>SUBUNIT</scope>
    <scope>SUBCELLULAR LOCATION</scope>
</reference>
<reference key="33">
    <citation type="journal article" date="2013" name="J. Biol. Chem.">
        <title>Four of the most common mutations in primary hyperoxaluria type 1 unmask the cryptic mitochondrial targeting sequence of alanine:glyoxylate aminotransferase encoded by the polymorphic minor allele.</title>
        <authorList>
            <person name="Fargue S."/>
            <person name="Lewin J."/>
            <person name="Rumsby G."/>
            <person name="Danpure C.J."/>
        </authorList>
    </citation>
    <scope>CHARACTERIZATION OF VARIANTS HP1 ARG-41; ILE-152; ARG-170 AND THR-244</scope>
    <scope>FUNCTION</scope>
    <scope>CATALYTIC ACTIVITY</scope>
    <scope>SUBCELLULAR LOCATION</scope>
    <scope>SUBUNIT</scope>
</reference>
<reference key="34">
    <citation type="journal article" date="2014" name="BMC Nephrol.">
        <title>Mutational analysis of AGXT in two Chinese families with primary hyperoxaluria type 1.</title>
        <authorList>
            <person name="Li G.M."/>
            <person name="Xu H."/>
            <person name="Shen Q."/>
            <person name="Gong Y.N."/>
            <person name="Fang X.Y."/>
            <person name="Sun L."/>
            <person name="Liu H.M."/>
            <person name="An Y."/>
        </authorList>
    </citation>
    <scope>VARIANT HP1 ASN-202</scope>
</reference>
<reference key="35">
    <citation type="journal article" date="2015" name="Biochim. Biophys. Acta">
        <title>Misfolding caused by the pathogenic mutation G47R on the minor allele of alanine:glyoxylate aminotransferase and chaperoning activity of pyridoxine.</title>
        <authorList>
            <person name="Montioli R."/>
            <person name="Oppici E."/>
            <person name="Dindo M."/>
            <person name="Roncador A."/>
            <person name="Gotte G."/>
            <person name="Cellini B."/>
            <person name="Borri Voltattorni C."/>
        </authorList>
    </citation>
    <scope>CHARACTERIZATION OF VARIANT HP1 ARG-47</scope>
    <scope>FUNCTION</scope>
    <scope>CATALYTIC ACTIVITY</scope>
    <scope>SUBCELLULAR LOCATION</scope>
</reference>
<keyword id="KW-0002">3D-structure</keyword>
<keyword id="KW-0007">Acetylation</keyword>
<keyword id="KW-0032">Aminotransferase</keyword>
<keyword id="KW-0225">Disease variant</keyword>
<keyword id="KW-0576">Peroxisome</keyword>
<keyword id="KW-0597">Phosphoprotein</keyword>
<keyword id="KW-1267">Proteomics identification</keyword>
<keyword id="KW-0663">Pyridoxal phosphate</keyword>
<keyword id="KW-1185">Reference proteome</keyword>
<keyword id="KW-0808">Transferase</keyword>
<comment type="function">
    <text evidence="2 7 9 21 22 24">Peroxisomal aminotransferase that catalyzes the transamination of glyoxylate to glycine and contributes to the glyoxylate detoxification (PubMed:10960483, PubMed:12777626, PubMed:23229545, PubMed:24055001, PubMed:26149463). Also catalyzes the transamination between L-serine and pyruvate and contributes to gluconeogenesis from the L-serine metabolism (PubMed:10347152).</text>
</comment>
<comment type="catalytic activity">
    <reaction evidence="2">
        <text>L-serine + pyruvate = 3-hydroxypyruvate + L-alanine</text>
        <dbReference type="Rhea" id="RHEA:22852"/>
        <dbReference type="ChEBI" id="CHEBI:15361"/>
        <dbReference type="ChEBI" id="CHEBI:17180"/>
        <dbReference type="ChEBI" id="CHEBI:33384"/>
        <dbReference type="ChEBI" id="CHEBI:57972"/>
        <dbReference type="EC" id="2.6.1.51"/>
    </reaction>
    <physiologicalReaction direction="left-to-right" evidence="29">
        <dbReference type="Rhea" id="RHEA:22853"/>
    </physiologicalReaction>
</comment>
<comment type="catalytic activity">
    <reaction evidence="7 9 21 22 24">
        <text>glyoxylate + L-alanine = glycine + pyruvate</text>
        <dbReference type="Rhea" id="RHEA:24248"/>
        <dbReference type="ChEBI" id="CHEBI:15361"/>
        <dbReference type="ChEBI" id="CHEBI:36655"/>
        <dbReference type="ChEBI" id="CHEBI:57305"/>
        <dbReference type="ChEBI" id="CHEBI:57972"/>
        <dbReference type="EC" id="2.6.1.44"/>
    </reaction>
    <physiologicalReaction direction="left-to-right" evidence="22 24">
        <dbReference type="Rhea" id="RHEA:24249"/>
    </physiologicalReaction>
</comment>
<comment type="cofactor">
    <cofactor evidence="7">
        <name>pyridoxal 5'-phosphate</name>
        <dbReference type="ChEBI" id="CHEBI:597326"/>
    </cofactor>
</comment>
<comment type="activity regulation">
    <text evidence="7">Alanine--glyoxylate aminotransferase activity is inhibited by 1 mM (aminooxy)acetic acid by 97.5%.</text>
</comment>
<comment type="biophysicochemical properties">
    <kinetics>
        <KM evidence="7">9.1 mM for L-alanine (with the His-AGXT construct)</KM>
        <KM evidence="7">9.4 mM for L-alanine (with the AGXT-His construct)</KM>
        <KM evidence="7">0.23 mM for glyoxylate (with the His-AGXT construct)</KM>
        <KM evidence="7">0.39 mM for glyoxylate (with the AGXT-His construct)</KM>
        <KM evidence="9">0.36 mM for glyoxylate</KM>
        <KM evidence="9">14.9 mM for L-alanine</KM>
    </kinetics>
    <phDependence>
        <text evidence="7">Optimum pH is 7.5- 8.5.</text>
    </phDependence>
</comment>
<comment type="subunit">
    <text evidence="7 9 10 17 21 22">Homodimer.</text>
</comment>
<comment type="interaction">
    <interactant intactId="EBI-727098">
        <id>P21549</id>
    </interactant>
    <interactant intactId="EBI-11976299">
        <id>Q5BKX5-3</id>
        <label>ACTMAP</label>
    </interactant>
    <organismsDiffer>false</organismsDiffer>
    <experiments>3</experiments>
</comment>
<comment type="interaction">
    <interactant intactId="EBI-727098">
        <id>P21549</id>
    </interactant>
    <interactant intactId="EBI-727098">
        <id>P21549</id>
        <label>AGXT</label>
    </interactant>
    <organismsDiffer>false</organismsDiffer>
    <experiments>6</experiments>
</comment>
<comment type="interaction">
    <interactant intactId="EBI-727098">
        <id>P21549</id>
    </interactant>
    <interactant intactId="EBI-8624731">
        <id>P0C7T5</id>
        <label>ATXN1L</label>
    </interactant>
    <organismsDiffer>false</organismsDiffer>
    <experiments>3</experiments>
</comment>
<comment type="interaction">
    <interactant intactId="EBI-727098">
        <id>P21549</id>
    </interactant>
    <interactant intactId="EBI-10312707">
        <id>Q9NR55</id>
        <label>BATF3</label>
    </interactant>
    <organismsDiffer>false</organismsDiffer>
    <experiments>3</experiments>
</comment>
<comment type="interaction">
    <interactant intactId="EBI-727098">
        <id>P21549</id>
    </interactant>
    <interactant intactId="EBI-718615">
        <id>Q9H5F2</id>
        <label>CFAP68</label>
    </interactant>
    <organismsDiffer>false</organismsDiffer>
    <experiments>3</experiments>
</comment>
<comment type="interaction">
    <interactant intactId="EBI-727098">
        <id>P21549</id>
    </interactant>
    <interactant intactId="EBI-741528">
        <id>Q9UKJ5</id>
        <label>CHIC2</label>
    </interactant>
    <organismsDiffer>false</organismsDiffer>
    <experiments>3</experiments>
</comment>
<comment type="interaction">
    <interactant intactId="EBI-727098">
        <id>P21549</id>
    </interactant>
    <interactant intactId="EBI-3867333">
        <id>A8MQ03</id>
        <label>CYSRT1</label>
    </interactant>
    <organismsDiffer>false</organismsDiffer>
    <experiments>3</experiments>
</comment>
<comment type="interaction">
    <interactant intactId="EBI-727098">
        <id>P21549</id>
    </interactant>
    <interactant intactId="EBI-11525448">
        <id>O43281-2</id>
        <label>EFS</label>
    </interactant>
    <organismsDiffer>false</organismsDiffer>
    <experiments>3</experiments>
</comment>
<comment type="interaction">
    <interactant intactId="EBI-727098">
        <id>P21549</id>
    </interactant>
    <interactant intactId="EBI-12193763">
        <id>A1KXE4-2</id>
        <label>FAM168B</label>
    </interactant>
    <organismsDiffer>false</organismsDiffer>
    <experiments>3</experiments>
</comment>
<comment type="interaction">
    <interactant intactId="EBI-727098">
        <id>P21549</id>
    </interactant>
    <interactant intactId="EBI-750641">
        <id>Q5TD97</id>
        <label>FHL5</label>
    </interactant>
    <organismsDiffer>false</organismsDiffer>
    <experiments>3</experiments>
</comment>
<comment type="interaction">
    <interactant intactId="EBI-727098">
        <id>P21549</id>
    </interactant>
    <interactant intactId="EBI-602349">
        <id>P49356</id>
        <label>FNTB</label>
    </interactant>
    <organismsDiffer>false</organismsDiffer>
    <experiments>3</experiments>
</comment>
<comment type="interaction">
    <interactant intactId="EBI-727098">
        <id>P21549</id>
    </interactant>
    <interactant intactId="EBI-2806743">
        <id>P53539</id>
        <label>FOSB</label>
    </interactant>
    <organismsDiffer>false</organismsDiffer>
    <experiments>3</experiments>
</comment>
<comment type="interaction">
    <interactant intactId="EBI-727098">
        <id>P21549</id>
    </interactant>
    <interactant intactId="EBI-740785">
        <id>P49639</id>
        <label>HOXA1</label>
    </interactant>
    <organismsDiffer>false</organismsDiffer>
    <experiments>3</experiments>
</comment>
<comment type="interaction">
    <interactant intactId="EBI-727098">
        <id>P21549</id>
    </interactant>
    <interactant intactId="EBI-948001">
        <id>Q15323</id>
        <label>KRT31</label>
    </interactant>
    <organismsDiffer>false</organismsDiffer>
    <experiments>3</experiments>
</comment>
<comment type="interaction">
    <interactant intactId="EBI-727098">
        <id>P21549</id>
    </interactant>
    <interactant intactId="EBI-1047093">
        <id>O76011</id>
        <label>KRT34</label>
    </interactant>
    <organismsDiffer>false</organismsDiffer>
    <experiments>3</experiments>
</comment>
<comment type="interaction">
    <interactant intactId="EBI-727098">
        <id>P21549</id>
    </interactant>
    <interactant intactId="EBI-1045716">
        <id>O76014</id>
        <label>KRT37</label>
    </interactant>
    <organismsDiffer>false</organismsDiffer>
    <experiments>3</experiments>
</comment>
<comment type="interaction">
    <interactant intactId="EBI-727098">
        <id>P21549</id>
    </interactant>
    <interactant intactId="EBI-10171697">
        <id>Q6A162</id>
        <label>KRT40</label>
    </interactant>
    <organismsDiffer>false</organismsDiffer>
    <experiments>3</experiments>
</comment>
<comment type="interaction">
    <interactant intactId="EBI-727098">
        <id>P21549</id>
    </interactant>
    <interactant intactId="EBI-11959885">
        <id>Q07627</id>
        <label>KRTAP1-1</label>
    </interactant>
    <organismsDiffer>false</organismsDiffer>
    <experiments>3</experiments>
</comment>
<comment type="interaction">
    <interactant intactId="EBI-727098">
        <id>P21549</id>
    </interactant>
    <interactant intactId="EBI-11953334">
        <id>P60328</id>
        <label>KRTAP12-3</label>
    </interactant>
    <organismsDiffer>false</organismsDiffer>
    <experiments>3</experiments>
</comment>
<comment type="interaction">
    <interactant intactId="EBI-727098">
        <id>P21549</id>
    </interactant>
    <interactant intactId="EBI-9996449">
        <id>Q9BYR8</id>
        <label>KRTAP3-1</label>
    </interactant>
    <organismsDiffer>false</organismsDiffer>
    <experiments>3</experiments>
</comment>
<comment type="interaction">
    <interactant intactId="EBI-727098">
        <id>P21549</id>
    </interactant>
    <interactant intactId="EBI-22311199">
        <id>Q3LI67</id>
        <label>KRTAP6-3</label>
    </interactant>
    <organismsDiffer>false</organismsDiffer>
    <experiments>3</experiments>
</comment>
<comment type="interaction">
    <interactant intactId="EBI-727098">
        <id>P21549</id>
    </interactant>
    <interactant intactId="EBI-10261141">
        <id>Q8IUC2</id>
        <label>KRTAP8-1</label>
    </interactant>
    <organismsDiffer>false</organismsDiffer>
    <experiments>3</experiments>
</comment>
<comment type="interaction">
    <interactant intactId="EBI-727098">
        <id>P21549</id>
    </interactant>
    <interactant intactId="EBI-1044640">
        <id>Q9BYQ4</id>
        <label>KRTAP9-2</label>
    </interactant>
    <organismsDiffer>false</organismsDiffer>
    <experiments>3</experiments>
</comment>
<comment type="interaction">
    <interactant intactId="EBI-727098">
        <id>P21549</id>
    </interactant>
    <interactant intactId="EBI-744222">
        <id>O60711</id>
        <label>LPXN</label>
    </interactant>
    <organismsDiffer>false</organismsDiffer>
    <experiments>3</experiments>
</comment>
<comment type="interaction">
    <interactant intactId="EBI-727098">
        <id>P21549</id>
    </interactant>
    <interactant intactId="EBI-724076">
        <id>Q99750</id>
        <label>MDFI</label>
    </interactant>
    <organismsDiffer>false</organismsDiffer>
    <experiments>5</experiments>
</comment>
<comment type="interaction">
    <interactant intactId="EBI-727098">
        <id>P21549</id>
    </interactant>
    <interactant intactId="EBI-12835568">
        <id>Q5VZ52</id>
        <label>MORN5</label>
    </interactant>
    <organismsDiffer>false</organismsDiffer>
    <experiments>3</experiments>
</comment>
<comment type="interaction">
    <interactant intactId="EBI-727098">
        <id>P21549</id>
    </interactant>
    <interactant intactId="EBI-22310682">
        <id>P0DPK4</id>
        <label>NOTCH2NLC</label>
    </interactant>
    <organismsDiffer>false</organismsDiffer>
    <experiments>3</experiments>
</comment>
<comment type="interaction">
    <interactant intactId="EBI-727098">
        <id>P21549</id>
    </interactant>
    <interactant intactId="EBI-536879">
        <id>O43482</id>
        <label>OIP5</label>
    </interactant>
    <organismsDiffer>false</organismsDiffer>
    <experiments>3</experiments>
</comment>
<comment type="interaction">
    <interactant intactId="EBI-727098">
        <id>P21549</id>
    </interactant>
    <interactant intactId="EBI-15982193">
        <id>P50542-1</id>
        <label>PEX5</label>
    </interactant>
    <organismsDiffer>false</organismsDiffer>
    <experiments>4</experiments>
</comment>
<comment type="interaction">
    <interactant intactId="EBI-727098">
        <id>P21549</id>
    </interactant>
    <interactant intactId="EBI-726466">
        <id>O15496</id>
        <label>PLA2G10</label>
    </interactant>
    <organismsDiffer>false</organismsDiffer>
    <experiments>3</experiments>
</comment>
<comment type="interaction">
    <interactant intactId="EBI-727098">
        <id>P21549</id>
    </interactant>
    <interactant intactId="EBI-12891828">
        <id>Q6ZR37</id>
        <label>PLEKHG7</label>
    </interactant>
    <organismsDiffer>false</organismsDiffer>
    <experiments>3</experiments>
</comment>
<comment type="interaction">
    <interactant intactId="EBI-727098">
        <id>P21549</id>
    </interactant>
    <interactant intactId="EBI-11320284">
        <id>Q9NQX0</id>
        <label>PRDM6</label>
    </interactant>
    <organismsDiffer>false</organismsDiffer>
    <experiments>3</experiments>
</comment>
<comment type="interaction">
    <interactant intactId="EBI-727098">
        <id>P21549</id>
    </interactant>
    <interactant intactId="EBI-746118">
        <id>Q8HWS3</id>
        <label>RFX6</label>
    </interactant>
    <organismsDiffer>false</organismsDiffer>
    <experiments>3</experiments>
</comment>
<comment type="interaction">
    <interactant intactId="EBI-727098">
        <id>P21549</id>
    </interactant>
    <interactant intactId="EBI-12408727">
        <id>Q5W111-2</id>
        <label>SPRYD7</label>
    </interactant>
    <organismsDiffer>false</organismsDiffer>
    <experiments>3</experiments>
</comment>
<comment type="interaction">
    <interactant intactId="EBI-727098">
        <id>P21549</id>
    </interactant>
    <interactant intactId="EBI-719893">
        <id>Q8WVR3</id>
        <label>TRAPPC14</label>
    </interactant>
    <organismsDiffer>false</organismsDiffer>
    <experiments>3</experiments>
</comment>
<comment type="interaction">
    <interactant intactId="EBI-727098">
        <id>P21549</id>
    </interactant>
    <interactant intactId="EBI-948354">
        <id>Q6DKK2</id>
        <label>TTC19</label>
    </interactant>
    <organismsDiffer>false</organismsDiffer>
    <experiments>3</experiments>
</comment>
<comment type="subcellular location">
    <subcellularLocation>
        <location evidence="7 9 18 21 22 24">Peroxisome</location>
    </subcellularLocation>
</comment>
<comment type="tissue specificity">
    <text>Liver.</text>
</comment>
<comment type="polymorphism">
    <text evidence="18">Variant p.Pro11Leu acts synergistically with other variants in AGXT producing specific enzymatic phenotypes in HP1 patients. The combined presence of variants p.Pro11Leu and p.Ile340Met defines the minor AGXT allele, whereas their absence defines the major allele. The minor allele has frequencies of 20% in normal European and North American populations, and 50% in HP1 patients.</text>
</comment>
<comment type="disease" evidence="3 4 5 6 7 8 9 11 12 13 14 15 16 17 18 19 20 21 22 23 24 25 26 27">
    <disease id="DI-01778">
        <name>Hyperoxaluria primary 1</name>
        <acronym>HP1</acronym>
        <description>An inborn error of glyoxylate metabolism characterized by increased excretion of oxalate and glycolate, and progressive tissue accumulation of insoluble calcium oxalate. Affected individuals are at risk for nephrolithiasis, nephrocalcinosis and early onset end-stage renal disease.</description>
        <dbReference type="MIM" id="259900"/>
    </disease>
    <text>The disease is caused by variants affecting the gene represented in this entry.</text>
</comment>
<comment type="similarity">
    <text evidence="28">Belongs to the class-V pyridoxal-phosphate-dependent aminotransferase family.</text>
</comment>
<comment type="caution">
    <text evidence="28">The intracellular compartmentalization of AGTX in mammalian hepatocytes is species dependent. In human and rabbit, AGTX is peroxisomal. In new world monkeys (marmoset) and rodents (rat and mouse), it is distributed approximately evenly between peroxisomes and mitochondria. In carnivores, like cat, the great majority of the enzyme is mitochondrial with only a small proportion being peroxisomal.</text>
</comment>
<feature type="chain" id="PRO_0000150237" description="Alanine--glyoxylate aminotransferase">
    <location>
        <begin position="1"/>
        <end position="392"/>
    </location>
</feature>
<feature type="binding site">
    <location>
        <position position="360"/>
    </location>
    <ligand>
        <name>substrate</name>
    </ligand>
</feature>
<feature type="modified residue" description="Phosphothreonine" evidence="31">
    <location>
        <position position="9"/>
    </location>
</feature>
<feature type="modified residue" description="N6-(pyridoxal phosphate)lysine">
    <location>
        <position position="209"/>
    </location>
</feature>
<feature type="modified residue" description="N6-acetyllysine; alternate" evidence="1">
    <location>
        <position position="225"/>
    </location>
</feature>
<feature type="modified residue" description="N6-succinyllysine; alternate" evidence="1">
    <location>
        <position position="225"/>
    </location>
</feature>
<feature type="modified residue" description="N6-acetyllysine" evidence="1">
    <location>
        <position position="234"/>
    </location>
</feature>
<feature type="modified residue" description="N6-acetyllysine" evidence="1">
    <location>
        <position position="312"/>
    </location>
</feature>
<feature type="sequence variant" id="VAR_060547" description="No loss of alanine--glyoxylate aminotransferase activity; dbSNP:rs115014558." evidence="14 15 19">
    <original>T</original>
    <variation>N</variation>
    <location>
        <position position="9"/>
    </location>
</feature>
<feature type="sequence variant" id="VAR_000587" description="In allele minor; associated in cis with M-340; decreased specific alanine--glyoxylate aminotransferase activity in vitro when associated with M-340; loss of alanine--glyoxylate aminotransferase activity in vitro when associated with I-152 and M-340; loss of alanine--glyoxylate aminotransferase activity in vitro when associated with R-170 and M-340; loss of alanine--glyoxylate aminotransferase activity in vitro when associated with T-244 and M-340; causes mitochondrial mistargeting when associated with R-170 and M-340; dbSNP:rs34116584." evidence="7 18">
    <original>P</original>
    <variation>L</variation>
    <location>
        <position position="11"/>
    </location>
</feature>
<feature type="sequence variant" id="VAR_048236" description="In dbSNP:rs34885252.">
    <original>N</original>
    <variation>S</variation>
    <location>
        <position position="22"/>
    </location>
</feature>
<feature type="sequence variant" id="VAR_074582" description="In HP1; associated in cis with L-11 and M-340; results in loss of alanine--glyoxylate aminotransferase activity; dbSNP:rs180177157." evidence="19">
    <original>R</original>
    <variation>C</variation>
    <location>
        <position position="36"/>
    </location>
</feature>
<feature type="sequence variant" id="VAR_074583" description="In HP1; loss of alanine--glyoxylate aminotransferase activity; dbSNP:rs180177168." evidence="19">
    <original>G</original>
    <variation>E</variation>
    <location>
        <position position="41"/>
    </location>
</feature>
<feature type="sequence variant" id="VAR_000588" description="In HP1; associated in cis with L-11 and M-340; results in loss of protein stability; loss of alanine--glyoxylate aminotransferase activity; loss of dimerization; partial mitochondrial mistargeting; intraperoxisomal protein aggregation seen; dbSNP:rs121908523." evidence="5 7 15 17 19 21 25">
    <original>G</original>
    <variation>R</variation>
    <location>
        <position position="41"/>
    </location>
</feature>
<feature type="sequence variant" id="VAR_010969" description="In HP1; reduced alanine--glyoxylate aminotransferase activity; no loss of dimerization; no effect on protein stability; dbSNP:rs180177168." evidence="3 4 17">
    <original>G</original>
    <variation>V</variation>
    <location>
        <position position="41"/>
    </location>
</feature>
<feature type="sequence variant" id="VAR_074584" description="In HP1; associated in cis with L-11 and M-340; results in protein misfolding; decreased alanine--glyoxylate aminotransferase activity; reduced expression levels; reduced pyridoxal phosphate binding; reduced dimerization; reduced thermostability; increased propensity to aggregation; increased susceptibility to proteolytic degradation within the N-terminal region; mitochondrial mistargeting; exposure to pyridoxine can rescue the functionality by partially preventing aggregation and degradation and by redirecting all the protein to the peroxisome; dbSNP:rs180177173." evidence="24">
    <original>G</original>
    <variation>R</variation>
    <location>
        <position position="47"/>
    </location>
</feature>
<feature type="sequence variant" id="VAR_008878" description="In HP1; abolishes alanine--glyoxylate aminotransferase activity by interfering with pyridoxal phosphate binding; dbSNP:rs121908522." evidence="7 12 17">
    <original>G</original>
    <variation>E</variation>
    <location>
        <position position="82"/>
    </location>
</feature>
<feature type="sequence variant" id="VAR_060548" description="In HP1; dbSNP:rs180177185." evidence="13">
    <original>G</original>
    <variation>R</variation>
    <location>
        <position position="82"/>
    </location>
</feature>
<feature type="sequence variant" id="VAR_010970" description="In HP1." evidence="3 4">
    <original>E</original>
    <variation>EE</variation>
    <location>
        <position position="95"/>
    </location>
</feature>
<feature type="sequence variant" id="VAR_060549" description="In HP1; associated in cis with L-11 and M-340; results in loss of alanine--glyoxylate aminotransferase activity; loss of dimerization; decreased protein stability; dbSNP:rs180177197." evidence="15 17 27">
    <original>W</original>
    <variation>R</variation>
    <location>
        <position position="108"/>
    </location>
</feature>
<feature type="sequence variant" id="VAR_060550" description="In HP1; loss of alanine--glyoxylate aminotransferase activity; loss of dimerization; decreased protein stability; causes protein aggregation; dbSNP:rs796052061." evidence="8 17">
    <original>A</original>
    <variation>D</variation>
    <location>
        <position position="112"/>
    </location>
</feature>
<feature type="sequence variant" id="VAR_010971" description="In HP1; dbSNP:rs180177207." evidence="3 4">
    <original>G</original>
    <variation>R</variation>
    <location>
        <position position="116"/>
    </location>
</feature>
<feature type="sequence variant" id="VAR_060551" description="In HP1." evidence="14">
    <location>
        <position position="139"/>
    </location>
</feature>
<feature type="sequence variant" id="VAR_074585" description="In HP1; associated in cis with L-11 and M-340; results in loss of alanine--glyoxylate aminotransferase activity; dbSNP:rs180177222." evidence="19">
    <original>L</original>
    <variation>P</variation>
    <location>
        <position position="150"/>
    </location>
</feature>
<feature type="sequence variant" id="VAR_000589" description="In HP1; associated in cis with L-11 and M-340; results in protein destabilization; no loss of dimerization; decreased alanine--glyoxylate aminotransferase activity; loss of alanine--glyoxylate aminotransferase activity when associated with L-11 and M-340; mitochondrial mistargeting when associated with L-11 and M-340; dbSNP:rs121908524." evidence="6 7 13 19 21 25">
    <original>F</original>
    <variation>I</variation>
    <location>
        <position position="152"/>
    </location>
</feature>
<feature type="sequence variant" id="VAR_060552" description="In HP1; dbSNP:rs180177223." evidence="13">
    <original>L</original>
    <variation>V</variation>
    <location>
        <position position="153"/>
    </location>
</feature>
<feature type="sequence variant" id="VAR_010972" description="In HP1; loss of alanine--glyoxylate aminotransferase activity; loss of dimerization; decreased protein stability; dbSNP:rs121908530." evidence="3 4 5 14 15 17 19">
    <original>G</original>
    <variation>R</variation>
    <location>
        <position position="156"/>
    </location>
</feature>
<feature type="sequence variant" id="VAR_060553" description="In HP1; loss of alanine--glyoxylate aminotransferase activity; dbSNP:rs180177225." evidence="14 19">
    <original>S</original>
    <variation>L</variation>
    <location>
        <position position="158"/>
    </location>
</feature>
<feature type="sequence variant" id="VAR_074586" description="In HP1; associated in cis with L-11 and M-340; results in loss of alanine--glyoxylate aminotransferase activity; reduced expression levels; decreased protein stability; protein aggregation seen in the cytosol with a decreased aggregation propensity in the presence of pyridoxal phosphate; reduced peroxisomal localization; dbSNP:rs180177227." evidence="19 22">
    <original>G</original>
    <variation>C</variation>
    <location>
        <position position="161"/>
    </location>
</feature>
<feature type="sequence variant" id="VAR_060554" description="In HP1; loss of alanine--glyoxylate aminotransferase activity; reduced expression levels; decreased protein stability; protein aggregation seen in the cytosol with a decreased aggregation propensity in the presence of pyridoxal phosphate; loss of dimerization; dbSNP:rs180177227." evidence="16 17 22">
    <original>G</original>
    <variation>R</variation>
    <location>
        <position position="161"/>
    </location>
</feature>
<feature type="sequence variant" id="VAR_074587" description="In HP1; associated in cis with L-11 and M-340; results in loss of alanine--glyoxylate aminotransferase activity; reduced expression levels; decreased protein stability; protein aggregation seen in the cytosol with a decreased aggregation propensity in the presence of pyridoxal phosphate; reduced peroxisomal localization; dbSNP:rs180177227." evidence="19 22">
    <original>G</original>
    <variation>S</variation>
    <location>
        <position position="161"/>
    </location>
</feature>
<feature type="sequence variant" id="VAR_074588" description="In HP1; associated in cis with L-11 and M-340; results in loss of alanine--glyoxylate aminotransferase activity; dbSNP:rs180177230." evidence="19">
    <original>L</original>
    <variation>P</variation>
    <location>
        <position position="166"/>
    </location>
</feature>
<feature type="sequence variant" id="VAR_000590" description="In HP1; associated in cis with L-11 and M-340; decrease in alanine--glyoxylate aminotransferase activity; loss of dimerization; partial loss of protein stability but protein stability increases in the presence of pyridoxal phosphate; causes protein aggregation; loss of alanine--glyoxylate aminotransferase activity in vitro when associated with L-11 and M-340; results in mitochondrial mistargeting when associated with L-11 and M-340; dbSNP:rs121908529." evidence="6 7 13 17 18 19 21">
    <original>G</original>
    <variation>R</variation>
    <location>
        <position position="170"/>
    </location>
</feature>
<feature type="sequence variant" id="VAR_060555" description="In HP1; loss of alanine--glyoxylate aminotransferase activity; loss of dimerization; decreased protein stability; causes protein aggregation; dbSNP:rs180177231." evidence="17 19 27">
    <original>C</original>
    <variation>Y</variation>
    <location>
        <position position="173"/>
    </location>
</feature>
<feature type="sequence variant" id="VAR_010973" description="In HP1; loss of alanine--glyoxylate aminotransferase activity; no loss of dimerization; no effect on protein stability; dbSNP:rs180177236." evidence="6 17">
    <original>D</original>
    <variation>N</variation>
    <location>
        <position position="183"/>
    </location>
</feature>
<feature type="sequence variant" id="VAR_000591" description="In HP1; loss of alanine--glyoxylate aminotransferase activity; loss of dimerization but improved dimerization in the presence of pyridoxal phosphate; decreased protein stability; dbSNP:rs180177238." evidence="11 17">
    <original>S</original>
    <variation>F</variation>
    <location>
        <position position="187"/>
    </location>
</feature>
<feature type="sequence variant" id="VAR_060556" description="In HP1; dbSNP:rs180177239." evidence="5 14 15 27">
    <original>G</original>
    <variation>R</variation>
    <location>
        <position position="190"/>
    </location>
</feature>
<feature type="sequence variant" id="VAR_060557" description="In HP1; dbSNP:rs180177244." evidence="15">
    <original>M</original>
    <variation>R</variation>
    <location>
        <position position="195"/>
    </location>
</feature>
<feature type="sequence variant" id="VAR_060558" description="In HP1; dbSNP:rs180177246." evidence="14">
    <original>D</original>
    <variation>E</variation>
    <location>
        <position position="201"/>
    </location>
</feature>
<feature type="sequence variant" id="VAR_074589" description="In HP1; uncertain significance; dbSNP:rs536352238." evidence="23">
    <original>I</original>
    <variation>N</variation>
    <location>
        <position position="202"/>
    </location>
</feature>
<feature type="sequence variant" id="VAR_000592" description="In HP1; loss of alanine--glyoxylate aminotransferase activity; decreased protein stability; dbSNP:rs121908520." evidence="17 20">
    <original>S</original>
    <variation>P</variation>
    <location>
        <position position="205"/>
    </location>
</feature>
<feature type="sequence variant" id="VAR_060559" description="In HP1; loss of alanine--glyoxylate aminotransferase activity; loss of dimerization; no effect on protein stability; dbSNP:rs180177253." evidence="16 17">
    <original>S</original>
    <variation>L</variation>
    <location>
        <position position="218"/>
    </location>
</feature>
<feature type="sequence variant" id="VAR_008879" description="In HP1; associated in cis with L-11 and M-340; results in loss of alanine--glyoxylate aminotransferase activity; dbSNP:rs121908526." evidence="6 19 26">
    <original>R</original>
    <variation>C</variation>
    <location>
        <position position="233"/>
    </location>
</feature>
<feature type="sequence variant" id="VAR_008880" description="In HP1; associated in cis with L-11 and M-340; results in loss of alanine--glyoxylate aminotransferase activity; dbSNP:rs121908527." evidence="19 26">
    <original>R</original>
    <variation>H</variation>
    <location>
        <position position="233"/>
    </location>
</feature>
<feature type="sequence variant" id="VAR_060560" description="In HP1; dbSNP:rs121908527." evidence="14">
    <original>R</original>
    <variation>L</variation>
    <location>
        <position position="233"/>
    </location>
</feature>
<feature type="sequence variant" id="VAR_060561" description="In HP1; dbSNP:rs180177258." evidence="15">
    <original>D</original>
    <variation>H</variation>
    <location>
        <position position="243"/>
    </location>
</feature>
<feature type="sequence variant" id="VAR_008881" description="In HP1; associated in cis with L-11 and M-340; results in protein misfolding; decreased alanine--glyoxylate aminotransferase activity in vitro; no loss of dimerization; partial mitochondrial mistargeting; loss of alanine--glyoxylate aminotransferase activity in vitro when associated with L-11 and M-340; dbSNP:rs121908525." evidence="5 6 7 9 14 15 19 21 26">
    <original>I</original>
    <variation>T</variation>
    <location>
        <position position="244"/>
    </location>
</feature>
<feature type="sequence variant" id="VAR_060562" description="In HP1; associated in cis with L-11 and M-340; results in loss of alanine--glyoxylate aminotransferase activity; dbSNP:rs180177264." evidence="14 19">
    <original>C</original>
    <variation>R</variation>
    <location>
        <position position="253"/>
    </location>
</feature>
<feature type="sequence variant" id="VAR_060563" description="In HP1; dbSNP:rs180177277." evidence="15">
    <original>I</original>
    <variation>M</variation>
    <location>
        <position position="279"/>
    </location>
</feature>
<feature type="sequence variant" id="VAR_060564" description="In dbSNP:rs140992177." evidence="16">
    <original>I</original>
    <variation>T</variation>
    <location>
        <position position="279"/>
    </location>
</feature>
<feature type="sequence variant" id="VAR_060565" description="In dbSNP:rs73106685." evidence="16">
    <original>A</original>
    <variation>V</variation>
    <location>
        <position position="280"/>
    </location>
</feature>
<feature type="sequence variant" id="VAR_060566" description="In HP1; dbSNP:rs180177289." evidence="15">
    <original>S</original>
    <variation>T</variation>
    <location>
        <position position="287"/>
    </location>
</feature>
<feature type="sequence variant" id="VAR_060567" description="In HP1; dbSNP:rs180177290." evidence="5 15">
    <original>R</original>
    <variation>C</variation>
    <location>
        <position position="289"/>
    </location>
</feature>
<feature type="sequence variant" id="VAR_048237" description="In dbSNP:rs13408961.">
    <original>A</original>
    <variation>T</variation>
    <location>
        <position position="295"/>
    </location>
</feature>
<feature type="sequence variant" id="VAR_060568" description="In HP1; dbSNP:rs180177291." evidence="27">
    <location>
        <position position="296"/>
    </location>
</feature>
<feature type="sequence variant" id="VAR_060569" description="In HP1; dbSNP:rs180177293." evidence="5 15">
    <original>L</original>
    <variation>P</variation>
    <location>
        <position position="298"/>
    </location>
</feature>
<feature type="sequence variant" id="VAR_060570" description="In dbSNP:rs115057148." evidence="8">
    <original>V</original>
    <variation>I</variation>
    <location>
        <position position="326"/>
    </location>
</feature>
<feature type="sequence variant" id="VAR_060571" description="In HP1; dbSNP:rs180177155." evidence="13">
    <original>V</original>
    <variation>D</variation>
    <location>
        <position position="336"/>
    </location>
</feature>
<feature type="sequence variant" id="VAR_000593" description="In allele minor; associated in cis with L-11; no effect on alanine--glyoxylate aminotransferase activity in vitro; decreased specific alanine--glyoxylate aminotransferase activity in vitro when associated with L-11; loss of alanine--glyoxylate aminotransferase activity in vitro when associated with L-11 and I-152; loss of alanine--glyoxylate aminotransferase activity in vitro when associated with L-11 and R-170; loss of alanine--glyoxylate aminotransferase activity in vitro when associated with L-11 and T-244; results in mitochondrial mistargeting when associated with L-11 and R-170; dbSNP:rs4426527." evidence="18">
    <original>I</original>
    <variation>M</variation>
    <location>
        <position position="340"/>
    </location>
</feature>
<feature type="sequence variant" id="VAR_060572" description="In HP1; dbSNP:rs180177156." evidence="27">
    <original>G</original>
    <variation>D</variation>
    <location>
        <position position="350"/>
    </location>
</feature>
<feature type="mutagenesis site" description="Affects pyridoxal phosphate binding; loss of alanine--glyoxylate aminotransferase activity." evidence="7 17">
    <original>K</original>
    <variation>R</variation>
    <location>
        <position position="209"/>
    </location>
</feature>
<feature type="helix" evidence="33">
    <location>
        <begin position="13"/>
        <end position="15"/>
    </location>
</feature>
<feature type="strand" evidence="33">
    <location>
        <begin position="27"/>
        <end position="29"/>
    </location>
</feature>
<feature type="helix" evidence="33">
    <location>
        <begin position="35"/>
        <end position="41"/>
    </location>
</feature>
<feature type="helix" evidence="33">
    <location>
        <begin position="51"/>
        <end position="68"/>
    </location>
</feature>
<feature type="strand" evidence="33">
    <location>
        <begin position="73"/>
        <end position="80"/>
    </location>
</feature>
<feature type="helix" evidence="33">
    <location>
        <begin position="82"/>
        <end position="93"/>
    </location>
</feature>
<feature type="strand" evidence="33">
    <location>
        <begin position="99"/>
        <end position="106"/>
    </location>
</feature>
<feature type="helix" evidence="33">
    <location>
        <begin position="107"/>
        <end position="118"/>
    </location>
</feature>
<feature type="strand" evidence="33">
    <location>
        <begin position="122"/>
        <end position="127"/>
    </location>
</feature>
<feature type="helix" evidence="33">
    <location>
        <begin position="136"/>
        <end position="146"/>
    </location>
</feature>
<feature type="strand" evidence="33">
    <location>
        <begin position="149"/>
        <end position="156"/>
    </location>
</feature>
<feature type="turn" evidence="33">
    <location>
        <begin position="158"/>
        <end position="160"/>
    </location>
</feature>
<feature type="helix" evidence="33">
    <location>
        <begin position="169"/>
        <end position="175"/>
    </location>
</feature>
<feature type="strand" evidence="33">
    <location>
        <begin position="179"/>
        <end position="183"/>
    </location>
</feature>
<feature type="turn" evidence="33">
    <location>
        <begin position="185"/>
        <end position="190"/>
    </location>
</feature>
<feature type="turn" evidence="33">
    <location>
        <begin position="195"/>
        <end position="199"/>
    </location>
</feature>
<feature type="strand" evidence="33">
    <location>
        <begin position="201"/>
        <end position="209"/>
    </location>
</feature>
<feature type="strand" evidence="33">
    <location>
        <begin position="218"/>
        <end position="222"/>
    </location>
</feature>
<feature type="helix" evidence="33">
    <location>
        <begin position="224"/>
        <end position="231"/>
    </location>
</feature>
<feature type="helix" evidence="33">
    <location>
        <begin position="244"/>
        <end position="250"/>
    </location>
</feature>
<feature type="strand" evidence="33">
    <location>
        <begin position="254"/>
        <end position="256"/>
    </location>
</feature>
<feature type="helix" evidence="33">
    <location>
        <begin position="266"/>
        <end position="282"/>
    </location>
</feature>
<feature type="helix" evidence="33">
    <location>
        <begin position="284"/>
        <end position="304"/>
    </location>
</feature>
<feature type="strand" evidence="33">
    <location>
        <begin position="308"/>
        <end position="311"/>
    </location>
</feature>
<feature type="helix" evidence="33">
    <location>
        <begin position="314"/>
        <end position="316"/>
    </location>
</feature>
<feature type="strand" evidence="33">
    <location>
        <begin position="321"/>
        <end position="325"/>
    </location>
</feature>
<feature type="helix" evidence="33">
    <location>
        <begin position="332"/>
        <end position="343"/>
    </location>
</feature>
<feature type="strand" evidence="32">
    <location>
        <begin position="344"/>
        <end position="346"/>
    </location>
</feature>
<feature type="helix" evidence="33">
    <location>
        <begin position="352"/>
        <end position="354"/>
    </location>
</feature>
<feature type="turn" evidence="33">
    <location>
        <begin position="355"/>
        <end position="357"/>
    </location>
</feature>
<feature type="strand" evidence="33">
    <location>
        <begin position="358"/>
        <end position="362"/>
    </location>
</feature>
<feature type="helix" evidence="33">
    <location>
        <begin position="365"/>
        <end position="367"/>
    </location>
</feature>
<feature type="helix" evidence="33">
    <location>
        <begin position="370"/>
        <end position="386"/>
    </location>
</feature>